<keyword id="KW-0125">Carotenoid biosynthesis</keyword>
<keyword id="KW-0150">Chloroplast</keyword>
<keyword id="KW-0413">Isomerase</keyword>
<keyword id="KW-0472">Membrane</keyword>
<keyword id="KW-0520">NAD</keyword>
<keyword id="KW-0934">Plastid</keyword>
<keyword id="KW-1185">Reference proteome</keyword>
<keyword id="KW-0809">Transit peptide</keyword>
<keyword id="KW-0812">Transmembrane</keyword>
<keyword id="KW-1133">Transmembrane helix</keyword>
<accession>O65837</accession>
<reference key="1">
    <citation type="submission" date="1998-03" db="EMBL/GenBank/DDBJ databases">
        <title>Regulation of expression of the gene for lycopene epsilon cyclase during fruit ripening of tomato.</title>
        <authorList>
            <person name="Ronen G."/>
            <person name="Cohen M."/>
            <person name="Zamir D."/>
            <person name="Hirshberg J."/>
        </authorList>
    </citation>
    <scope>NUCLEOTIDE SEQUENCE [MRNA]</scope>
    <source>
        <strain>cv. VF36</strain>
        <tissue>Leaf</tissue>
    </source>
</reference>
<name>LCYE_SOLLC</name>
<sequence>MECVGVQNVGAMAVLTRPRLNRWSGGELCQEKSIFLAYEQYESKCNSSSGSDSCVVDKEDFADEEDYIKAGGSQLVFVQMQQKKDMDQQSKLSDELRQISAGQTVLDLVVIGCGPAGLALAAESAKLGLNVGLVGPDLPFTNNYGVWEDEFKDLGLQACIEHVWRDTIVYLDDDEPILIGRAYGRVSRHFLHEELLKRCVEAGVLYLNSKVDRIVEATNGQSLVECEGDVVIPCRFVTVASGAASGKFLQYELGSPRVSVQTAYGVEVEVDNNPFDPSLMVFMDYRDYLRHDAQSLEAKYPTFLYAMPMSPTRVFFEETCLASKDAMPFDLLKKKLMLRLNTLGVRIKEIYEEEWSYIPVGGSLPNTEQKTLAFGAAASMVHPATGYSVVRSLSEAPKCASVLANILRQHYSKNMLTSSSIPSISTQAWNTLWPQERKRQRSFFLFGLALILQLDIEGIRSFFRAFFRVPKWMWQGFLGSSLSSADLMLFAFYMFIIAPNDMRKGLIRHLLSDPTGATLIRTYLTF</sequence>
<gene>
    <name evidence="4" type="primary">CRTL-E-1</name>
</gene>
<organism>
    <name type="scientific">Solanum lycopersicum</name>
    <name type="common">Tomato</name>
    <name type="synonym">Lycopersicon esculentum</name>
    <dbReference type="NCBI Taxonomy" id="4081"/>
    <lineage>
        <taxon>Eukaryota</taxon>
        <taxon>Viridiplantae</taxon>
        <taxon>Streptophyta</taxon>
        <taxon>Embryophyta</taxon>
        <taxon>Tracheophyta</taxon>
        <taxon>Spermatophyta</taxon>
        <taxon>Magnoliopsida</taxon>
        <taxon>eudicotyledons</taxon>
        <taxon>Gunneridae</taxon>
        <taxon>Pentapetalae</taxon>
        <taxon>asterids</taxon>
        <taxon>lamiids</taxon>
        <taxon>Solanales</taxon>
        <taxon>Solanaceae</taxon>
        <taxon>Solanoideae</taxon>
        <taxon>Solaneae</taxon>
        <taxon>Solanum</taxon>
        <taxon>Solanum subgen. Lycopersicon</taxon>
    </lineage>
</organism>
<dbReference type="EC" id="5.5.1.18" evidence="1"/>
<dbReference type="EMBL" id="Y14387">
    <property type="protein sequence ID" value="CAA74745.1"/>
    <property type="molecule type" value="mRNA"/>
</dbReference>
<dbReference type="PIR" id="T07082">
    <property type="entry name" value="T07082"/>
</dbReference>
<dbReference type="SMR" id="O65837"/>
<dbReference type="FunCoup" id="O65837">
    <property type="interactions" value="413"/>
</dbReference>
<dbReference type="STRING" id="4081.O65837"/>
<dbReference type="PaxDb" id="4081-Solyc12g008980.1.1"/>
<dbReference type="eggNOG" id="ENOG502QT61">
    <property type="taxonomic scope" value="Eukaryota"/>
</dbReference>
<dbReference type="InParanoid" id="O65837"/>
<dbReference type="BioCyc" id="MetaCyc:MONOMER-12155"/>
<dbReference type="UniPathway" id="UPA00801"/>
<dbReference type="UniPathway" id="UPA00804"/>
<dbReference type="Proteomes" id="UP000004994">
    <property type="component" value="Unplaced"/>
</dbReference>
<dbReference type="ExpressionAtlas" id="O65837">
    <property type="expression patterns" value="baseline and differential"/>
</dbReference>
<dbReference type="GO" id="GO:0031969">
    <property type="term" value="C:chloroplast membrane"/>
    <property type="evidence" value="ECO:0007669"/>
    <property type="project" value="UniProtKB-SubCell"/>
</dbReference>
<dbReference type="GO" id="GO:0016860">
    <property type="term" value="F:intramolecular oxidoreductase activity"/>
    <property type="evidence" value="ECO:0007669"/>
    <property type="project" value="UniProtKB-ARBA"/>
</dbReference>
<dbReference type="GO" id="GO:0016705">
    <property type="term" value="F:oxidoreductase activity, acting on paired donors, with incorporation or reduction of molecular oxygen"/>
    <property type="evidence" value="ECO:0007669"/>
    <property type="project" value="InterPro"/>
</dbReference>
<dbReference type="GO" id="GO:0016117">
    <property type="term" value="P:carotenoid biosynthetic process"/>
    <property type="evidence" value="ECO:0007669"/>
    <property type="project" value="UniProtKB-KW"/>
</dbReference>
<dbReference type="FunFam" id="3.50.50.60:FF:000101">
    <property type="entry name" value="lycopene epsilon cyclase, chloroplastic"/>
    <property type="match status" value="1"/>
</dbReference>
<dbReference type="Gene3D" id="3.50.50.60">
    <property type="entry name" value="FAD/NAD(P)-binding domain"/>
    <property type="match status" value="1"/>
</dbReference>
<dbReference type="InterPro" id="IPR036188">
    <property type="entry name" value="FAD/NAD-bd_sf"/>
</dbReference>
<dbReference type="InterPro" id="IPR010108">
    <property type="entry name" value="Lycopene_cyclase_b/e"/>
</dbReference>
<dbReference type="NCBIfam" id="TIGR01790">
    <property type="entry name" value="carotene-cycl"/>
    <property type="match status" value="1"/>
</dbReference>
<dbReference type="PANTHER" id="PTHR39757">
    <property type="match status" value="1"/>
</dbReference>
<dbReference type="PANTHER" id="PTHR39757:SF3">
    <property type="entry name" value="LYCOPENE EPSILON CYCLASE, CHLOROPLASTIC"/>
    <property type="match status" value="1"/>
</dbReference>
<dbReference type="Pfam" id="PF05834">
    <property type="entry name" value="Lycopene_cycl"/>
    <property type="match status" value="1"/>
</dbReference>
<dbReference type="PRINTS" id="PR00411">
    <property type="entry name" value="PNDRDTASEI"/>
</dbReference>
<dbReference type="SUPFAM" id="SSF51905">
    <property type="entry name" value="FAD/NAD(P)-binding domain"/>
    <property type="match status" value="1"/>
</dbReference>
<proteinExistence type="evidence at transcript level"/>
<evidence type="ECO:0000250" key="1">
    <source>
        <dbReference type="UniProtKB" id="Q38932"/>
    </source>
</evidence>
<evidence type="ECO:0000255" key="2"/>
<evidence type="ECO:0000305" key="3"/>
<evidence type="ECO:0000312" key="4">
    <source>
        <dbReference type="EMBL" id="CAA74745.1"/>
    </source>
</evidence>
<feature type="transit peptide" description="Chloroplast" evidence="2">
    <location>
        <begin position="1"/>
        <end status="unknown"/>
    </location>
</feature>
<feature type="chain" id="PRO_0000018435" description="Lycopene epsilon cyclase, chloroplastic">
    <location>
        <begin status="unknown"/>
        <end position="526"/>
    </location>
</feature>
<feature type="transmembrane region" description="Helical" evidence="2">
    <location>
        <begin position="443"/>
        <end position="463"/>
    </location>
</feature>
<feature type="transmembrane region" description="Helical" evidence="2">
    <location>
        <begin position="477"/>
        <end position="497"/>
    </location>
</feature>
<feature type="binding site" evidence="2">
    <location>
        <begin position="108"/>
        <end position="136"/>
    </location>
    <ligand>
        <name>NAD(+)</name>
        <dbReference type="ChEBI" id="CHEBI:57540"/>
    </ligand>
</feature>
<protein>
    <recommendedName>
        <fullName evidence="3">Lycopene epsilon cyclase, chloroplastic</fullName>
        <ecNumber evidence="1">5.5.1.18</ecNumber>
    </recommendedName>
</protein>
<comment type="function">
    <text evidence="1">Catalyzes the single cyclization reaction which converts lycopene to delta-carotene and neurosporene to alpha-zeacarotene. Required for lutein biosynthesis.</text>
</comment>
<comment type="catalytic activity">
    <reaction evidence="1">
        <text>a carotenoid psi-end group = a carotenoid epsilon-end group</text>
        <dbReference type="Rhea" id="RHEA:55616"/>
        <dbReference type="ChEBI" id="CHEBI:139114"/>
        <dbReference type="ChEBI" id="CHEBI:139115"/>
        <dbReference type="EC" id="5.5.1.18"/>
    </reaction>
</comment>
<comment type="pathway">
    <text evidence="3">Carotenoid biosynthesis; alpha-zeacarotene biosynthesis.</text>
</comment>
<comment type="pathway">
    <text evidence="3">Carotenoid biosynthesis; delta-carotene biosynthesis.</text>
</comment>
<comment type="subcellular location">
    <subcellularLocation>
        <location evidence="2">Plastid</location>
        <location evidence="2">Chloroplast membrane</location>
        <topology evidence="2">Multi-pass membrane protein</topology>
    </subcellularLocation>
</comment>
<comment type="similarity">
    <text evidence="3">Belongs to the lycopene cyclase family.</text>
</comment>